<protein>
    <recommendedName>
        <fullName>Cytochrome b5-related protein</fullName>
    </recommendedName>
    <alternativeName>
        <fullName>Protein TU-36B</fullName>
    </alternativeName>
</protein>
<evidence type="ECO:0000255" key="1">
    <source>
        <dbReference type="PROSITE-ProRule" id="PRU00279"/>
    </source>
</evidence>
<evidence type="ECO:0000305" key="2"/>
<organism>
    <name type="scientific">Drosophila melanogaster</name>
    <name type="common">Fruit fly</name>
    <dbReference type="NCBI Taxonomy" id="7227"/>
    <lineage>
        <taxon>Eukaryota</taxon>
        <taxon>Metazoa</taxon>
        <taxon>Ecdysozoa</taxon>
        <taxon>Arthropoda</taxon>
        <taxon>Hexapoda</taxon>
        <taxon>Insecta</taxon>
        <taxon>Pterygota</taxon>
        <taxon>Neoptera</taxon>
        <taxon>Endopterygota</taxon>
        <taxon>Diptera</taxon>
        <taxon>Brachycera</taxon>
        <taxon>Muscomorpha</taxon>
        <taxon>Ephydroidea</taxon>
        <taxon>Drosophilidae</taxon>
        <taxon>Drosophila</taxon>
        <taxon>Sophophora</taxon>
    </lineage>
</organism>
<proteinExistence type="evidence at transcript level"/>
<dbReference type="EMBL" id="X15008">
    <property type="protein sequence ID" value="CAA33113.1"/>
    <property type="status" value="ALT_FRAME"/>
    <property type="molecule type" value="Genomic_DNA"/>
</dbReference>
<dbReference type="EMBL" id="AE014134">
    <property type="protein sequence ID" value="AAF53567.1"/>
    <property type="molecule type" value="Genomic_DNA"/>
</dbReference>
<dbReference type="EMBL" id="AY058287">
    <property type="protein sequence ID" value="AAL13516.1"/>
    <property type="molecule type" value="mRNA"/>
</dbReference>
<dbReference type="PIR" id="S05441">
    <property type="entry name" value="S05441"/>
</dbReference>
<dbReference type="RefSeq" id="NP_001260514.1">
    <property type="nucleotide sequence ID" value="NM_001273585.1"/>
</dbReference>
<dbReference type="RefSeq" id="NP_477154.1">
    <property type="nucleotide sequence ID" value="NM_057806.5"/>
</dbReference>
<dbReference type="SMR" id="P19967"/>
<dbReference type="BioGRID" id="61015">
    <property type="interactions" value="4"/>
</dbReference>
<dbReference type="FunCoup" id="P19967">
    <property type="interactions" value="552"/>
</dbReference>
<dbReference type="IntAct" id="P19967">
    <property type="interactions" value="1"/>
</dbReference>
<dbReference type="STRING" id="7227.FBpp0304264"/>
<dbReference type="PaxDb" id="7227-FBpp0304264"/>
<dbReference type="DNASU" id="35008"/>
<dbReference type="EnsemblMetazoa" id="FBtr0080932">
    <property type="protein sequence ID" value="FBpp0080486"/>
    <property type="gene ID" value="FBgn0000406"/>
</dbReference>
<dbReference type="EnsemblMetazoa" id="FBtr0331931">
    <property type="protein sequence ID" value="FBpp0304264"/>
    <property type="gene ID" value="FBgn0000406"/>
</dbReference>
<dbReference type="GeneID" id="35008"/>
<dbReference type="KEGG" id="dme:Dmel_CG13279"/>
<dbReference type="AGR" id="FB:FBgn0000406"/>
<dbReference type="CTD" id="35008"/>
<dbReference type="FlyBase" id="FBgn0000406">
    <property type="gene designation" value="Cyt-b5-r"/>
</dbReference>
<dbReference type="VEuPathDB" id="VectorBase:FBgn0000406"/>
<dbReference type="eggNOG" id="KOG4232">
    <property type="taxonomic scope" value="Eukaryota"/>
</dbReference>
<dbReference type="GeneTree" id="ENSGT00940000176788"/>
<dbReference type="HOGENOM" id="CLU_627470_0_0_1"/>
<dbReference type="InParanoid" id="P19967"/>
<dbReference type="OMA" id="LMNFAAW"/>
<dbReference type="OrthoDB" id="260519at2759"/>
<dbReference type="PhylomeDB" id="P19967"/>
<dbReference type="SignaLink" id="P19967"/>
<dbReference type="BioGRID-ORCS" id="35008">
    <property type="hits" value="0 hits in 1 CRISPR screen"/>
</dbReference>
<dbReference type="ChiTaRS" id="Cyt-b5-r">
    <property type="organism name" value="fly"/>
</dbReference>
<dbReference type="GenomeRNAi" id="35008"/>
<dbReference type="PRO" id="PR:P19967"/>
<dbReference type="Proteomes" id="UP000000803">
    <property type="component" value="Chromosome 2L"/>
</dbReference>
<dbReference type="Bgee" id="FBgn0000406">
    <property type="expression patterns" value="Expressed in fat body cell in Malpighian tubule and 83 other cell types or tissues"/>
</dbReference>
<dbReference type="ExpressionAtlas" id="P19967">
    <property type="expression patterns" value="baseline and differential"/>
</dbReference>
<dbReference type="GO" id="GO:0005739">
    <property type="term" value="C:mitochondrion"/>
    <property type="evidence" value="ECO:0000314"/>
    <property type="project" value="FlyBase"/>
</dbReference>
<dbReference type="GO" id="GO:0062076">
    <property type="term" value="F:acyl-CoA (8-3)-desaturase activity"/>
    <property type="evidence" value="ECO:0000250"/>
    <property type="project" value="FlyBase"/>
</dbReference>
<dbReference type="GO" id="GO:0020037">
    <property type="term" value="F:heme binding"/>
    <property type="evidence" value="ECO:0007669"/>
    <property type="project" value="InterPro"/>
</dbReference>
<dbReference type="GO" id="GO:0046872">
    <property type="term" value="F:metal ion binding"/>
    <property type="evidence" value="ECO:0007669"/>
    <property type="project" value="UniProtKB-KW"/>
</dbReference>
<dbReference type="GO" id="GO:0006629">
    <property type="term" value="P:lipid metabolic process"/>
    <property type="evidence" value="ECO:0007669"/>
    <property type="project" value="InterPro"/>
</dbReference>
<dbReference type="FunFam" id="3.10.120.10:FF:000020">
    <property type="entry name" value="Cytochrome b5-related protein"/>
    <property type="match status" value="1"/>
</dbReference>
<dbReference type="Gene3D" id="3.10.120.10">
    <property type="entry name" value="Cytochrome b5-like heme/steroid binding domain"/>
    <property type="match status" value="1"/>
</dbReference>
<dbReference type="InterPro" id="IPR001199">
    <property type="entry name" value="Cyt_B5-like_heme/steroid-bd"/>
</dbReference>
<dbReference type="InterPro" id="IPR036400">
    <property type="entry name" value="Cyt_B5-like_heme/steroid_sf"/>
</dbReference>
<dbReference type="InterPro" id="IPR018506">
    <property type="entry name" value="Cyt_B5_heme-BS"/>
</dbReference>
<dbReference type="InterPro" id="IPR053100">
    <property type="entry name" value="Cytochrome_b5-related"/>
</dbReference>
<dbReference type="InterPro" id="IPR005804">
    <property type="entry name" value="FA_desaturase_dom"/>
</dbReference>
<dbReference type="InterPro" id="IPR012171">
    <property type="entry name" value="Fatty_acid_desaturase"/>
</dbReference>
<dbReference type="PANTHER" id="PTHR16740">
    <property type="entry name" value="CYTOCHROME B5-RELATED PROTEIN-RELATED"/>
    <property type="match status" value="1"/>
</dbReference>
<dbReference type="PANTHER" id="PTHR16740:SF1">
    <property type="entry name" value="CYTOCHROME B5-RELATED PROTEIN-RELATED"/>
    <property type="match status" value="1"/>
</dbReference>
<dbReference type="Pfam" id="PF00173">
    <property type="entry name" value="Cyt-b5"/>
    <property type="match status" value="1"/>
</dbReference>
<dbReference type="Pfam" id="PF00487">
    <property type="entry name" value="FA_desaturase"/>
    <property type="match status" value="1"/>
</dbReference>
<dbReference type="PIRSF" id="PIRSF015921">
    <property type="entry name" value="FA_sphinglp_des"/>
    <property type="match status" value="1"/>
</dbReference>
<dbReference type="SMART" id="SM01117">
    <property type="entry name" value="Cyt-b5"/>
    <property type="match status" value="1"/>
</dbReference>
<dbReference type="SUPFAM" id="SSF55856">
    <property type="entry name" value="Cytochrome b5-like heme/steroid binding domain"/>
    <property type="match status" value="1"/>
</dbReference>
<dbReference type="PROSITE" id="PS00191">
    <property type="entry name" value="CYTOCHROME_B5_1"/>
    <property type="match status" value="1"/>
</dbReference>
<dbReference type="PROSITE" id="PS50255">
    <property type="entry name" value="CYTOCHROME_B5_2"/>
    <property type="match status" value="1"/>
</dbReference>
<reference key="1">
    <citation type="journal article" date="1989" name="Nucleic Acids Res.">
        <title>Structure and expression of a muscle specific gene which is adjacent to the Drosophila myosin heavy-chain gene and can encode a cytochrome b related protein.</title>
        <authorList>
            <person name="Levin R.J."/>
            <person name="Boychuk P.L."/>
            <person name="Croniger C.M."/>
            <person name="Kazzaz J.A."/>
            <person name="Rozek C.E."/>
        </authorList>
    </citation>
    <scope>NUCLEOTIDE SEQUENCE [GENOMIC DNA]</scope>
</reference>
<reference key="2">
    <citation type="journal article" date="2000" name="Science">
        <title>The genome sequence of Drosophila melanogaster.</title>
        <authorList>
            <person name="Adams M.D."/>
            <person name="Celniker S.E."/>
            <person name="Holt R.A."/>
            <person name="Evans C.A."/>
            <person name="Gocayne J.D."/>
            <person name="Amanatides P.G."/>
            <person name="Scherer S.E."/>
            <person name="Li P.W."/>
            <person name="Hoskins R.A."/>
            <person name="Galle R.F."/>
            <person name="George R.A."/>
            <person name="Lewis S.E."/>
            <person name="Richards S."/>
            <person name="Ashburner M."/>
            <person name="Henderson S.N."/>
            <person name="Sutton G.G."/>
            <person name="Wortman J.R."/>
            <person name="Yandell M.D."/>
            <person name="Zhang Q."/>
            <person name="Chen L.X."/>
            <person name="Brandon R.C."/>
            <person name="Rogers Y.-H.C."/>
            <person name="Blazej R.G."/>
            <person name="Champe M."/>
            <person name="Pfeiffer B.D."/>
            <person name="Wan K.H."/>
            <person name="Doyle C."/>
            <person name="Baxter E.G."/>
            <person name="Helt G."/>
            <person name="Nelson C.R."/>
            <person name="Miklos G.L.G."/>
            <person name="Abril J.F."/>
            <person name="Agbayani A."/>
            <person name="An H.-J."/>
            <person name="Andrews-Pfannkoch C."/>
            <person name="Baldwin D."/>
            <person name="Ballew R.M."/>
            <person name="Basu A."/>
            <person name="Baxendale J."/>
            <person name="Bayraktaroglu L."/>
            <person name="Beasley E.M."/>
            <person name="Beeson K.Y."/>
            <person name="Benos P.V."/>
            <person name="Berman B.P."/>
            <person name="Bhandari D."/>
            <person name="Bolshakov S."/>
            <person name="Borkova D."/>
            <person name="Botchan M.R."/>
            <person name="Bouck J."/>
            <person name="Brokstein P."/>
            <person name="Brottier P."/>
            <person name="Burtis K.C."/>
            <person name="Busam D.A."/>
            <person name="Butler H."/>
            <person name="Cadieu E."/>
            <person name="Center A."/>
            <person name="Chandra I."/>
            <person name="Cherry J.M."/>
            <person name="Cawley S."/>
            <person name="Dahlke C."/>
            <person name="Davenport L.B."/>
            <person name="Davies P."/>
            <person name="de Pablos B."/>
            <person name="Delcher A."/>
            <person name="Deng Z."/>
            <person name="Mays A.D."/>
            <person name="Dew I."/>
            <person name="Dietz S.M."/>
            <person name="Dodson K."/>
            <person name="Doup L.E."/>
            <person name="Downes M."/>
            <person name="Dugan-Rocha S."/>
            <person name="Dunkov B.C."/>
            <person name="Dunn P."/>
            <person name="Durbin K.J."/>
            <person name="Evangelista C.C."/>
            <person name="Ferraz C."/>
            <person name="Ferriera S."/>
            <person name="Fleischmann W."/>
            <person name="Fosler C."/>
            <person name="Gabrielian A.E."/>
            <person name="Garg N.S."/>
            <person name="Gelbart W.M."/>
            <person name="Glasser K."/>
            <person name="Glodek A."/>
            <person name="Gong F."/>
            <person name="Gorrell J.H."/>
            <person name="Gu Z."/>
            <person name="Guan P."/>
            <person name="Harris M."/>
            <person name="Harris N.L."/>
            <person name="Harvey D.A."/>
            <person name="Heiman T.J."/>
            <person name="Hernandez J.R."/>
            <person name="Houck J."/>
            <person name="Hostin D."/>
            <person name="Houston K.A."/>
            <person name="Howland T.J."/>
            <person name="Wei M.-H."/>
            <person name="Ibegwam C."/>
            <person name="Jalali M."/>
            <person name="Kalush F."/>
            <person name="Karpen G.H."/>
            <person name="Ke Z."/>
            <person name="Kennison J.A."/>
            <person name="Ketchum K.A."/>
            <person name="Kimmel B.E."/>
            <person name="Kodira C.D."/>
            <person name="Kraft C.L."/>
            <person name="Kravitz S."/>
            <person name="Kulp D."/>
            <person name="Lai Z."/>
            <person name="Lasko P."/>
            <person name="Lei Y."/>
            <person name="Levitsky A.A."/>
            <person name="Li J.H."/>
            <person name="Li Z."/>
            <person name="Liang Y."/>
            <person name="Lin X."/>
            <person name="Liu X."/>
            <person name="Mattei B."/>
            <person name="McIntosh T.C."/>
            <person name="McLeod M.P."/>
            <person name="McPherson D."/>
            <person name="Merkulov G."/>
            <person name="Milshina N.V."/>
            <person name="Mobarry C."/>
            <person name="Morris J."/>
            <person name="Moshrefi A."/>
            <person name="Mount S.M."/>
            <person name="Moy M."/>
            <person name="Murphy B."/>
            <person name="Murphy L."/>
            <person name="Muzny D.M."/>
            <person name="Nelson D.L."/>
            <person name="Nelson D.R."/>
            <person name="Nelson K.A."/>
            <person name="Nixon K."/>
            <person name="Nusskern D.R."/>
            <person name="Pacleb J.M."/>
            <person name="Palazzolo M."/>
            <person name="Pittman G.S."/>
            <person name="Pan S."/>
            <person name="Pollard J."/>
            <person name="Puri V."/>
            <person name="Reese M.G."/>
            <person name="Reinert K."/>
            <person name="Remington K."/>
            <person name="Saunders R.D.C."/>
            <person name="Scheeler F."/>
            <person name="Shen H."/>
            <person name="Shue B.C."/>
            <person name="Siden-Kiamos I."/>
            <person name="Simpson M."/>
            <person name="Skupski M.P."/>
            <person name="Smith T.J."/>
            <person name="Spier E."/>
            <person name="Spradling A.C."/>
            <person name="Stapleton M."/>
            <person name="Strong R."/>
            <person name="Sun E."/>
            <person name="Svirskas R."/>
            <person name="Tector C."/>
            <person name="Turner R."/>
            <person name="Venter E."/>
            <person name="Wang A.H."/>
            <person name="Wang X."/>
            <person name="Wang Z.-Y."/>
            <person name="Wassarman D.A."/>
            <person name="Weinstock G.M."/>
            <person name="Weissenbach J."/>
            <person name="Williams S.M."/>
            <person name="Woodage T."/>
            <person name="Worley K.C."/>
            <person name="Wu D."/>
            <person name="Yang S."/>
            <person name="Yao Q.A."/>
            <person name="Ye J."/>
            <person name="Yeh R.-F."/>
            <person name="Zaveri J.S."/>
            <person name="Zhan M."/>
            <person name="Zhang G."/>
            <person name="Zhao Q."/>
            <person name="Zheng L."/>
            <person name="Zheng X.H."/>
            <person name="Zhong F.N."/>
            <person name="Zhong W."/>
            <person name="Zhou X."/>
            <person name="Zhu S.C."/>
            <person name="Zhu X."/>
            <person name="Smith H.O."/>
            <person name="Gibbs R.A."/>
            <person name="Myers E.W."/>
            <person name="Rubin G.M."/>
            <person name="Venter J.C."/>
        </authorList>
    </citation>
    <scope>NUCLEOTIDE SEQUENCE [LARGE SCALE GENOMIC DNA]</scope>
    <source>
        <strain>Berkeley</strain>
    </source>
</reference>
<reference key="3">
    <citation type="journal article" date="2002" name="Genome Biol.">
        <title>Annotation of the Drosophila melanogaster euchromatic genome: a systematic review.</title>
        <authorList>
            <person name="Misra S."/>
            <person name="Crosby M.A."/>
            <person name="Mungall C.J."/>
            <person name="Matthews B.B."/>
            <person name="Campbell K.S."/>
            <person name="Hradecky P."/>
            <person name="Huang Y."/>
            <person name="Kaminker J.S."/>
            <person name="Millburn G.H."/>
            <person name="Prochnik S.E."/>
            <person name="Smith C.D."/>
            <person name="Tupy J.L."/>
            <person name="Whitfield E.J."/>
            <person name="Bayraktaroglu L."/>
            <person name="Berman B.P."/>
            <person name="Bettencourt B.R."/>
            <person name="Celniker S.E."/>
            <person name="de Grey A.D.N.J."/>
            <person name="Drysdale R.A."/>
            <person name="Harris N.L."/>
            <person name="Richter J."/>
            <person name="Russo S."/>
            <person name="Schroeder A.J."/>
            <person name="Shu S.Q."/>
            <person name="Stapleton M."/>
            <person name="Yamada C."/>
            <person name="Ashburner M."/>
            <person name="Gelbart W.M."/>
            <person name="Rubin G.M."/>
            <person name="Lewis S.E."/>
        </authorList>
    </citation>
    <scope>GENOME REANNOTATION</scope>
    <source>
        <strain>Berkeley</strain>
    </source>
</reference>
<reference key="4">
    <citation type="journal article" date="2002" name="Genome Biol.">
        <title>A Drosophila full-length cDNA resource.</title>
        <authorList>
            <person name="Stapleton M."/>
            <person name="Carlson J.W."/>
            <person name="Brokstein P."/>
            <person name="Yu C."/>
            <person name="Champe M."/>
            <person name="George R.A."/>
            <person name="Guarin H."/>
            <person name="Kronmiller B."/>
            <person name="Pacleb J.M."/>
            <person name="Park S."/>
            <person name="Wan K.H."/>
            <person name="Rubin G.M."/>
            <person name="Celniker S.E."/>
        </authorList>
    </citation>
    <scope>NUCLEOTIDE SEQUENCE [LARGE SCALE MRNA]</scope>
    <source>
        <strain>Berkeley</strain>
        <tissue>Head</tissue>
    </source>
</reference>
<sequence length="436" mass="50355">MVIEEWKKSGIATKFPTYRNSALITTHSWQKGKRQDDGAEGLWRINDGIYDFTSFIDKHPGGPFWIRETKGTDITEAFEAHHLTTAPEKMIAKYKVRDAAEPRIYTLTLEEGGFYKTLKERVREQLKTIDKRPKKKSDLIHLGLVVSLYLLGIASAKYNSLLALVLASVALCWTVIVSHNYFHRRDNWQMYAFNLGMMNFAAWRVSHALSHHIYPNSYFDLELSMFEPLLCWVPNPHIKSKLMRYVSWVTEPVAYALAFFIQMGTRIFYSLRHTNILYWHDLLPLTIPIAIYLGTGGSLGIWICVRQWLAMTSIASFSFCLIGLNAAHHDPEIYHEGDANREDRDWGLFQVDTIIDRGDLKWSQFLVLTHFGDHVLHHLFPTLDHGLLPALYPVLYQTLDEFKGHLRECNHIEHMIGQHKQLLRIEPNPRAPGAGK</sequence>
<feature type="chain" id="PRO_0000166018" description="Cytochrome b5-related protein">
    <location>
        <begin position="1"/>
        <end position="436"/>
    </location>
</feature>
<feature type="domain" description="Cytochrome b5 heme-binding" evidence="1">
    <location>
        <begin position="16"/>
        <end position="100"/>
    </location>
</feature>
<feature type="binding site" description="axial binding residue" evidence="1">
    <location>
        <position position="59"/>
    </location>
    <ligand>
        <name>heme</name>
        <dbReference type="ChEBI" id="CHEBI:30413"/>
    </ligand>
    <ligandPart>
        <name>Fe</name>
        <dbReference type="ChEBI" id="CHEBI:18248"/>
    </ligandPart>
</feature>
<feature type="binding site" description="axial binding residue" evidence="1">
    <location>
        <position position="82"/>
    </location>
    <ligand>
        <name>heme</name>
        <dbReference type="ChEBI" id="CHEBI:30413"/>
    </ligand>
    <ligandPart>
        <name>Fe</name>
        <dbReference type="ChEBI" id="CHEBI:18248"/>
    </ligandPart>
</feature>
<feature type="sequence variant">
    <original>A</original>
    <variation>P</variation>
    <location>
        <position position="202"/>
    </location>
</feature>
<feature type="sequence variant">
    <original>I</original>
    <variation>T</variation>
    <location>
        <position position="213"/>
    </location>
</feature>
<feature type="sequence variant">
    <original>R</original>
    <variation>G</variation>
    <location>
        <position position="344"/>
    </location>
</feature>
<feature type="sequence conflict" description="In Ref. 1; CAA33113." evidence="2" ref="1">
    <original>FD</original>
    <variation>LN</variation>
    <location>
        <begin position="219"/>
        <end position="220"/>
    </location>
</feature>
<name>CYB5R_DROME</name>
<comment type="function">
    <text>May play a role in muscle cell metabolism.</text>
</comment>
<comment type="tissue specificity">
    <text>Muscle.</text>
</comment>
<comment type="sequence caution" evidence="2">
    <conflict type="frameshift">
        <sequence resource="EMBL-CDS" id="CAA33113"/>
    </conflict>
</comment>
<keyword id="KW-0349">Heme</keyword>
<keyword id="KW-0408">Iron</keyword>
<keyword id="KW-0479">Metal-binding</keyword>
<keyword id="KW-1185">Reference proteome</keyword>
<accession>P19967</accession>
<accession>Q9VJI2</accession>
<gene>
    <name type="primary">Cyt-b5-r</name>
    <name type="ORF">CG13279</name>
</gene>